<proteinExistence type="evidence at protein level"/>
<sequence length="1773" mass="173478">MRRGNISPAFWFLWLLLFGLLGPSSENTTAFTKGSDTTTASITGSETTMASTMASTSALTTGSKITTDSTTGSETTSASTMASTAAFTTGSETNTASTTDSGTTIASTRTFTTGSDTTTGSTAGSETIVASTTVSGTTTTFTIASTTVPETTMASSTTSTAGSEKTMASSIISETTMASTTGSETATVSTTGSETTTTSTASSEATKVSTTGSETTTASTAGSETTTTSTSMAGSEATTTSTADSKVITASSMSSETTVAPAAGSNTTTASTTGSETTTILIKASETTTASTAGSETTTPSPTGSQTTIVSISGSEITTTSTAGSENTTVSSAGSGTTTASMAGSETTVSTAGSETTTVSITGTETTMVSAMGSETTTNSTTSSETTVTSTAGSETTTVSTVGSETTTAYTADSETTAASTTGSEMTTVFTAGSETITPSTAGSETTTVSTAGSETTTVSTTGSETTTASTAHSETTAASTMGSETTKVSTAGSETTVSTAGSETTAASTEDSETNTAFTEDSKTTTASTTGFETTAASTTGSEPTMASTMGSETTMASTIGPETTKVSTASSEVTTVFAAGSETIRASTVGSETTTVSTTGSETTTASIMGSETSTDSTTGSETTTASTEGSETTTASTEGSEATTVSTTGSETTTVSITDSETTTTCTEGSEMTAVSTTVFETTTASTEGSEITIASTSDSETTTASTEGSETTTVTTAGSETKTAYTTGSETTTASNTGLETTTVFTIGSDTTTASTEGSETTAVSATGSEMTTVSTEGSENTTVSTTGSETTTVSTTGLETTTTSTEGSEMTTVSTTGAETTTDSTEGSGTTAASTAGSETTTVSTADSENTTASTADSETTSASTTGSETTTASTTSSETTTASTEGSETTTVSTTDSETTMVSTTGSERTITSTEGSETTTVSATGSETTVSTEGSGTTTVSITGSETTKVSTTGSETTTTSTEGSEITTASITGSETTTASTEGSETTTASTEGSETTSASTTGSETTTASTTSSETTMASIMGSETTMASTIGSETTKVSTASSKMTTVFTENSETTIASTTASETTTVSTAGSETIPASTAGSETTTTTSTEGSETTTASTEGSETTTASTESSETTTATTIGSETTTASTEGSETTTTSTEGSETTTASTEGSEITTVSTTGSETTTASTEGSETTTASTEGSELTTVSTTGSETITVSAEGSETTTVTTMGSETTTASTAGSETTTVSTAGSETTTASIEGSETTTVSSTGSETTTVSTTGTETTITSTEGSETTTVTTAGSETTAVYTTGSETTTTSTEGSETTTVSTTGSETTTASTADLETTTVSTSGSGTTTASTAGSETTTVYITGSKTTTASTEGSEATTVSTTSSETTTASTTGSEMTTVFTTVSETTTVSTIGSEATTSSAAGSEATTTSTEGSETTTASTAGSETTTASTAGSETTTASTSGSETNTACTTGSETSTPSSAGSETNTAFIIGSESTIASTASLEPTATSLTGSETTTVSITASGATAASTTVSSTTFVLTKATDVSIQPITNTPMSGTRTTGTRLTASSSVTMAPGMDFTASAASHTVPGIVLNTSGLGTSTMGASSTTSAHGVRTTTGSTREPTSSTFQETGPVSMGTNTVSMSHTPTNVIKPSGYLQPWAIILISLAAVVAAVGLSVGLSFCLRNLFFPLRYCGIYYPHGHSHSLGLDLNLGLGSGTFHSLGNALVHGGELEMGHGGTHGFGYGVGHGLSHIHGDGYGVNHGGHYGHGGGH</sequence>
<gene>
    <name type="primary">MUC22</name>
    <name type="synonym">G4</name>
    <name type="synonym">PBMUCL1</name>
</gene>
<dbReference type="EMBL" id="AB560770">
    <property type="protein sequence ID" value="BAJ24154.1"/>
    <property type="molecule type" value="mRNA"/>
</dbReference>
<dbReference type="EMBL" id="AB600271">
    <property type="protein sequence ID" value="BAJ33462.1"/>
    <property type="molecule type" value="mRNA"/>
</dbReference>
<dbReference type="EMBL" id="AB600272">
    <property type="protein sequence ID" value="BAJ33463.1"/>
    <property type="molecule type" value="mRNA"/>
</dbReference>
<dbReference type="EMBL" id="AL669830">
    <property type="status" value="NOT_ANNOTATED_CDS"/>
    <property type="molecule type" value="Genomic_DNA"/>
</dbReference>
<dbReference type="CCDS" id="CCDS59003.1"/>
<dbReference type="RefSeq" id="NP_001185744.1">
    <property type="nucleotide sequence ID" value="NM_001198815.1"/>
</dbReference>
<dbReference type="RefSeq" id="NP_001305413.1">
    <property type="nucleotide sequence ID" value="NM_001318484.1"/>
</dbReference>
<dbReference type="RefSeq" id="NP_001382343.1">
    <property type="nucleotide sequence ID" value="NM_001395414.1"/>
</dbReference>
<dbReference type="SMR" id="E2RYF6"/>
<dbReference type="BioGRID" id="610793">
    <property type="interactions" value="1"/>
</dbReference>
<dbReference type="IntAct" id="E2RYF6">
    <property type="interactions" value="1"/>
</dbReference>
<dbReference type="STRING" id="9606.ENSP00000455906"/>
<dbReference type="GlyGen" id="E2RYF6">
    <property type="glycosylation" value="1 site"/>
</dbReference>
<dbReference type="iPTMnet" id="E2RYF6"/>
<dbReference type="PhosphoSitePlus" id="E2RYF6"/>
<dbReference type="BioMuta" id="MUC22"/>
<dbReference type="PaxDb" id="9606-ENSP00000455906"/>
<dbReference type="Antibodypedia" id="82378">
    <property type="antibodies" value="1 antibodies from 1 providers"/>
</dbReference>
<dbReference type="DNASU" id="100507679"/>
<dbReference type="Ensembl" id="ENST00000561890.1">
    <property type="protein sequence ID" value="ENSP00000455906.1"/>
    <property type="gene ID" value="ENSG00000261272.1"/>
</dbReference>
<dbReference type="GeneID" id="100507679"/>
<dbReference type="KEGG" id="hsa:100507679"/>
<dbReference type="MANE-Select" id="ENST00000561890.1">
    <property type="protein sequence ID" value="ENSP00000455906.1"/>
    <property type="RefSeq nucleotide sequence ID" value="NM_001395414.1"/>
    <property type="RefSeq protein sequence ID" value="NP_001382343.1"/>
</dbReference>
<dbReference type="UCSC" id="uc063mxr.1">
    <property type="organism name" value="human"/>
</dbReference>
<dbReference type="AGR" id="HGNC:39755"/>
<dbReference type="CTD" id="100507679"/>
<dbReference type="DisGeNET" id="100507679"/>
<dbReference type="GeneCards" id="MUC22"/>
<dbReference type="HGNC" id="HGNC:39755">
    <property type="gene designation" value="MUC22"/>
</dbReference>
<dbReference type="HPA" id="ENSG00000261272">
    <property type="expression patterns" value="Tissue enriched (esophagus)"/>
</dbReference>
<dbReference type="MIM" id="613917">
    <property type="type" value="gene"/>
</dbReference>
<dbReference type="neXtProt" id="NX_E2RYF6"/>
<dbReference type="OpenTargets" id="ENSG00000261272"/>
<dbReference type="VEuPathDB" id="HostDB:ENSG00000261272"/>
<dbReference type="eggNOG" id="ENOG502RYA8">
    <property type="taxonomic scope" value="Eukaryota"/>
</dbReference>
<dbReference type="GeneTree" id="ENSGT00940000164570"/>
<dbReference type="HOGENOM" id="CLU_239049_0_0_1"/>
<dbReference type="InParanoid" id="E2RYF6"/>
<dbReference type="OMA" id="TTQINDT"/>
<dbReference type="OrthoDB" id="9540268at2759"/>
<dbReference type="PAN-GO" id="E2RYF6">
    <property type="GO annotations" value="0 GO annotations based on evolutionary models"/>
</dbReference>
<dbReference type="BioGRID-ORCS" id="100507679">
    <property type="hits" value="11 hits in 1138 CRISPR screens"/>
</dbReference>
<dbReference type="GenomeRNAi" id="100507679"/>
<dbReference type="Pharos" id="E2RYF6">
    <property type="development level" value="Tdark"/>
</dbReference>
<dbReference type="PRO" id="PR:E2RYF6"/>
<dbReference type="Proteomes" id="UP000005640">
    <property type="component" value="Chromosome 6"/>
</dbReference>
<dbReference type="RNAct" id="E2RYF6">
    <property type="molecule type" value="protein"/>
</dbReference>
<dbReference type="Bgee" id="ENSG00000261272">
    <property type="expression patterns" value="Expressed in male germ line stem cell (sensu Vertebrata) in testis and 13 other cell types or tissues"/>
</dbReference>
<dbReference type="GO" id="GO:0016020">
    <property type="term" value="C:membrane"/>
    <property type="evidence" value="ECO:0007669"/>
    <property type="project" value="UniProtKB-SubCell"/>
</dbReference>
<dbReference type="InterPro" id="IPR053330">
    <property type="entry name" value="Mucin-22-like"/>
</dbReference>
<dbReference type="InterPro" id="IPR028199">
    <property type="entry name" value="Mucin_dom"/>
</dbReference>
<dbReference type="PANTHER" id="PTHR37000">
    <property type="entry name" value="MUCIN-22"/>
    <property type="match status" value="1"/>
</dbReference>
<dbReference type="PANTHER" id="PTHR37000:SF3">
    <property type="entry name" value="MUCIN-22"/>
    <property type="match status" value="1"/>
</dbReference>
<dbReference type="Pfam" id="PF14654">
    <property type="entry name" value="Epiglycanin_C"/>
    <property type="match status" value="1"/>
</dbReference>
<organism>
    <name type="scientific">Homo sapiens</name>
    <name type="common">Human</name>
    <dbReference type="NCBI Taxonomy" id="9606"/>
    <lineage>
        <taxon>Eukaryota</taxon>
        <taxon>Metazoa</taxon>
        <taxon>Chordata</taxon>
        <taxon>Craniata</taxon>
        <taxon>Vertebrata</taxon>
        <taxon>Euteleostomi</taxon>
        <taxon>Mammalia</taxon>
        <taxon>Eutheria</taxon>
        <taxon>Euarchontoglires</taxon>
        <taxon>Primates</taxon>
        <taxon>Haplorrhini</taxon>
        <taxon>Catarrhini</taxon>
        <taxon>Hominidae</taxon>
        <taxon>Homo</taxon>
    </lineage>
</organism>
<accession>E2RYF6</accession>
<accession>H3BQR8</accession>
<keyword id="KW-0472">Membrane</keyword>
<keyword id="KW-1185">Reference proteome</keyword>
<keyword id="KW-0677">Repeat</keyword>
<keyword id="KW-0732">Signal</keyword>
<keyword id="KW-0812">Transmembrane</keyword>
<keyword id="KW-1133">Transmembrane helix</keyword>
<comment type="subcellular location">
    <subcellularLocation>
        <location evidence="4">Membrane</location>
        <topology evidence="4">Single-pass membrane protein</topology>
    </subcellularLocation>
</comment>
<comment type="tissue specificity">
    <text evidence="3">Expressed in lung by serous cells of the submucosal gland (at protein level). Detected in the placenta, lung and testis.</text>
</comment>
<comment type="induction">
    <text evidence="3">Up-regulated by poly(I:C).</text>
</comment>
<comment type="online information" name="Mucin database">
    <link uri="http://www.medkem.gu.se/mucinbiology/databases/"/>
</comment>
<protein>
    <recommendedName>
        <fullName>Mucin-22</fullName>
    </recommendedName>
    <alternativeName>
        <fullName>Panbronchiolitis-related mucin-like protein 1</fullName>
    </alternativeName>
</protein>
<evidence type="ECO:0000255" key="1"/>
<evidence type="ECO:0000256" key="2">
    <source>
        <dbReference type="SAM" id="MobiDB-lite"/>
    </source>
</evidence>
<evidence type="ECO:0000269" key="3">
    <source>
    </source>
</evidence>
<evidence type="ECO:0000305" key="4"/>
<reference key="1">
    <citation type="journal article" date="2011" name="Hum. Genet.">
        <title>Molecular cloning of two novel mucin-like genes in the disease-susceptibility locus for diffuse panbronchiolitis.</title>
        <authorList>
            <person name="Hijikata M."/>
            <person name="Matsushita I."/>
            <person name="Tanaka G."/>
            <person name="Tsuchiya T."/>
            <person name="Itoh H."/>
            <person name="Tokunaga K."/>
            <person name="Ohashi J."/>
            <person name="Homma S."/>
            <person name="Kobashi Y."/>
            <person name="Taguchi Y."/>
            <person name="Azuma A."/>
            <person name="Kudoh S."/>
            <person name="Keicho N."/>
        </authorList>
    </citation>
    <scope>NUCLEOTIDE SEQUENCE [MRNA]</scope>
    <scope>INDUCTION</scope>
    <scope>TISSUE SPECIFICITY</scope>
    <scope>VARIANT ASP-1712</scope>
    <source>
        <tissue>Lung</tissue>
    </source>
</reference>
<reference key="2">
    <citation type="journal article" date="2003" name="Nature">
        <title>The DNA sequence and analysis of human chromosome 6.</title>
        <authorList>
            <person name="Mungall A.J."/>
            <person name="Palmer S.A."/>
            <person name="Sims S.K."/>
            <person name="Edwards C.A."/>
            <person name="Ashurst J.L."/>
            <person name="Wilming L."/>
            <person name="Jones M.C."/>
            <person name="Horton R."/>
            <person name="Hunt S.E."/>
            <person name="Scott C.E."/>
            <person name="Gilbert J.G.R."/>
            <person name="Clamp M.E."/>
            <person name="Bethel G."/>
            <person name="Milne S."/>
            <person name="Ainscough R."/>
            <person name="Almeida J.P."/>
            <person name="Ambrose K.D."/>
            <person name="Andrews T.D."/>
            <person name="Ashwell R.I.S."/>
            <person name="Babbage A.K."/>
            <person name="Bagguley C.L."/>
            <person name="Bailey J."/>
            <person name="Banerjee R."/>
            <person name="Barker D.J."/>
            <person name="Barlow K.F."/>
            <person name="Bates K."/>
            <person name="Beare D.M."/>
            <person name="Beasley H."/>
            <person name="Beasley O."/>
            <person name="Bird C.P."/>
            <person name="Blakey S.E."/>
            <person name="Bray-Allen S."/>
            <person name="Brook J."/>
            <person name="Brown A.J."/>
            <person name="Brown J.Y."/>
            <person name="Burford D.C."/>
            <person name="Burrill W."/>
            <person name="Burton J."/>
            <person name="Carder C."/>
            <person name="Carter N.P."/>
            <person name="Chapman J.C."/>
            <person name="Clark S.Y."/>
            <person name="Clark G."/>
            <person name="Clee C.M."/>
            <person name="Clegg S."/>
            <person name="Cobley V."/>
            <person name="Collier R.E."/>
            <person name="Collins J.E."/>
            <person name="Colman L.K."/>
            <person name="Corby N.R."/>
            <person name="Coville G.J."/>
            <person name="Culley K.M."/>
            <person name="Dhami P."/>
            <person name="Davies J."/>
            <person name="Dunn M."/>
            <person name="Earthrowl M.E."/>
            <person name="Ellington A.E."/>
            <person name="Evans K.A."/>
            <person name="Faulkner L."/>
            <person name="Francis M.D."/>
            <person name="Frankish A."/>
            <person name="Frankland J."/>
            <person name="French L."/>
            <person name="Garner P."/>
            <person name="Garnett J."/>
            <person name="Ghori M.J."/>
            <person name="Gilby L.M."/>
            <person name="Gillson C.J."/>
            <person name="Glithero R.J."/>
            <person name="Grafham D.V."/>
            <person name="Grant M."/>
            <person name="Gribble S."/>
            <person name="Griffiths C."/>
            <person name="Griffiths M.N.D."/>
            <person name="Hall R."/>
            <person name="Halls K.S."/>
            <person name="Hammond S."/>
            <person name="Harley J.L."/>
            <person name="Hart E.A."/>
            <person name="Heath P.D."/>
            <person name="Heathcott R."/>
            <person name="Holmes S.J."/>
            <person name="Howden P.J."/>
            <person name="Howe K.L."/>
            <person name="Howell G.R."/>
            <person name="Huckle E."/>
            <person name="Humphray S.J."/>
            <person name="Humphries M.D."/>
            <person name="Hunt A.R."/>
            <person name="Johnson C.M."/>
            <person name="Joy A.A."/>
            <person name="Kay M."/>
            <person name="Keenan S.J."/>
            <person name="Kimberley A.M."/>
            <person name="King A."/>
            <person name="Laird G.K."/>
            <person name="Langford C."/>
            <person name="Lawlor S."/>
            <person name="Leongamornlert D.A."/>
            <person name="Leversha M."/>
            <person name="Lloyd C.R."/>
            <person name="Lloyd D.M."/>
            <person name="Loveland J.E."/>
            <person name="Lovell J."/>
            <person name="Martin S."/>
            <person name="Mashreghi-Mohammadi M."/>
            <person name="Maslen G.L."/>
            <person name="Matthews L."/>
            <person name="McCann O.T."/>
            <person name="McLaren S.J."/>
            <person name="McLay K."/>
            <person name="McMurray A."/>
            <person name="Moore M.J.F."/>
            <person name="Mullikin J.C."/>
            <person name="Niblett D."/>
            <person name="Nickerson T."/>
            <person name="Novik K.L."/>
            <person name="Oliver K."/>
            <person name="Overton-Larty E.K."/>
            <person name="Parker A."/>
            <person name="Patel R."/>
            <person name="Pearce A.V."/>
            <person name="Peck A.I."/>
            <person name="Phillimore B.J.C.T."/>
            <person name="Phillips S."/>
            <person name="Plumb R.W."/>
            <person name="Porter K.M."/>
            <person name="Ramsey Y."/>
            <person name="Ranby S.A."/>
            <person name="Rice C.M."/>
            <person name="Ross M.T."/>
            <person name="Searle S.M."/>
            <person name="Sehra H.K."/>
            <person name="Sheridan E."/>
            <person name="Skuce C.D."/>
            <person name="Smith S."/>
            <person name="Smith M."/>
            <person name="Spraggon L."/>
            <person name="Squares S.L."/>
            <person name="Steward C.A."/>
            <person name="Sycamore N."/>
            <person name="Tamlyn-Hall G."/>
            <person name="Tester J."/>
            <person name="Theaker A.J."/>
            <person name="Thomas D.W."/>
            <person name="Thorpe A."/>
            <person name="Tracey A."/>
            <person name="Tromans A."/>
            <person name="Tubby B."/>
            <person name="Wall M."/>
            <person name="Wallis J.M."/>
            <person name="West A.P."/>
            <person name="White S.S."/>
            <person name="Whitehead S.L."/>
            <person name="Whittaker H."/>
            <person name="Wild A."/>
            <person name="Willey D.J."/>
            <person name="Wilmer T.E."/>
            <person name="Wood J.M."/>
            <person name="Wray P.W."/>
            <person name="Wyatt J.C."/>
            <person name="Young L."/>
            <person name="Younger R.M."/>
            <person name="Bentley D.R."/>
            <person name="Coulson A."/>
            <person name="Durbin R.M."/>
            <person name="Hubbard T."/>
            <person name="Sulston J.E."/>
            <person name="Dunham I."/>
            <person name="Rogers J."/>
            <person name="Beck S."/>
        </authorList>
    </citation>
    <scope>NUCLEOTIDE SEQUENCE [LARGE SCALE GENOMIC DNA]</scope>
</reference>
<feature type="signal peptide" evidence="1">
    <location>
        <begin position="1"/>
        <end position="26"/>
    </location>
</feature>
<feature type="chain" id="PRO_0000410470" description="Mucin-22">
    <location>
        <begin position="27"/>
        <end position="1773"/>
    </location>
</feature>
<feature type="topological domain" description="Extracellular" evidence="1">
    <location>
        <begin position="27"/>
        <end position="1660"/>
    </location>
</feature>
<feature type="transmembrane region" description="Helical" evidence="1">
    <location>
        <begin position="1661"/>
        <end position="1681"/>
    </location>
</feature>
<feature type="topological domain" description="Cytoplasmic" evidence="1">
    <location>
        <begin position="1682"/>
        <end position="1773"/>
    </location>
</feature>
<feature type="region of interest" description="Disordered" evidence="2">
    <location>
        <begin position="61"/>
        <end position="102"/>
    </location>
</feature>
<feature type="region of interest" description="124 X 10 AA approximate repeats">
    <location>
        <begin position="153"/>
        <end position="1514"/>
    </location>
</feature>
<feature type="region of interest" description="Disordered" evidence="2">
    <location>
        <begin position="176"/>
        <end position="357"/>
    </location>
</feature>
<feature type="region of interest" description="Disordered" evidence="2">
    <location>
        <begin position="372"/>
        <end position="405"/>
    </location>
</feature>
<feature type="region of interest" description="Disordered" evidence="2">
    <location>
        <begin position="434"/>
        <end position="572"/>
    </location>
</feature>
<feature type="region of interest" description="Disordered" evidence="2">
    <location>
        <begin position="590"/>
        <end position="674"/>
    </location>
</feature>
<feature type="region of interest" description="Disordered" evidence="2">
    <location>
        <begin position="754"/>
        <end position="1026"/>
    </location>
</feature>
<feature type="region of interest" description="Disordered" evidence="2">
    <location>
        <begin position="1064"/>
        <end position="1485"/>
    </location>
</feature>
<feature type="region of interest" description="Disordered" evidence="2">
    <location>
        <begin position="1603"/>
        <end position="1639"/>
    </location>
</feature>
<feature type="compositionally biased region" description="Low complexity" evidence="2">
    <location>
        <begin position="178"/>
        <end position="243"/>
    </location>
</feature>
<feature type="compositionally biased region" description="Polar residues" evidence="2">
    <location>
        <begin position="248"/>
        <end position="258"/>
    </location>
</feature>
<feature type="compositionally biased region" description="Low complexity" evidence="2">
    <location>
        <begin position="262"/>
        <end position="357"/>
    </location>
</feature>
<feature type="compositionally biased region" description="Low complexity" evidence="2">
    <location>
        <begin position="440"/>
        <end position="481"/>
    </location>
</feature>
<feature type="compositionally biased region" description="Low complexity" evidence="2">
    <location>
        <begin position="490"/>
        <end position="546"/>
    </location>
</feature>
<feature type="compositionally biased region" description="Polar residues" evidence="2">
    <location>
        <begin position="547"/>
        <end position="572"/>
    </location>
</feature>
<feature type="compositionally biased region" description="Low complexity" evidence="2">
    <location>
        <begin position="755"/>
        <end position="1025"/>
    </location>
</feature>
<feature type="compositionally biased region" description="Low complexity" evidence="2">
    <location>
        <begin position="1064"/>
        <end position="1465"/>
    </location>
</feature>
<feature type="compositionally biased region" description="Polar residues" evidence="2">
    <location>
        <begin position="1466"/>
        <end position="1485"/>
    </location>
</feature>
<feature type="compositionally biased region" description="Polar residues" evidence="2">
    <location>
        <begin position="1615"/>
        <end position="1639"/>
    </location>
</feature>
<feature type="sequence variant" id="VAR_065357" description="In dbSNP:rs4248153." evidence="3">
    <original>N</original>
    <variation>D</variation>
    <location>
        <position position="1712"/>
    </location>
</feature>
<feature type="sequence conflict" description="In Ref. 1; BAJ24154/BAJ33462/BAJ33463." evidence="4" ref="1">
    <original>S</original>
    <variation>T</variation>
    <location>
        <position position="57"/>
    </location>
</feature>
<name>MUC22_HUMAN</name>